<sequence length="167" mass="18940">MPTRSLPTFLTLLLLASIDWVSKLVVLLKSCQLSPHSSAFLYSYVWGHFSFLIIPSFNEGAAFGLFTQYKIPLLIFRVCVILGLALFLRIKYKSLHRRTRVALTLILAGALGNVGDILLYGKVVDFLSLSYYSWRFPSFNLADAFISIGTLLLIGHLYFTKESKKYF</sequence>
<organism>
    <name type="scientific">Chlamydia trachomatis serovar A (strain ATCC VR-571B / DSM 19440 / HAR-13)</name>
    <dbReference type="NCBI Taxonomy" id="315277"/>
    <lineage>
        <taxon>Bacteria</taxon>
        <taxon>Pseudomonadati</taxon>
        <taxon>Chlamydiota</taxon>
        <taxon>Chlamydiia</taxon>
        <taxon>Chlamydiales</taxon>
        <taxon>Chlamydiaceae</taxon>
        <taxon>Chlamydia/Chlamydophila group</taxon>
        <taxon>Chlamydia</taxon>
    </lineage>
</organism>
<dbReference type="EC" id="3.4.23.36" evidence="1"/>
<dbReference type="EMBL" id="CP000051">
    <property type="protein sequence ID" value="AAX50677.1"/>
    <property type="molecule type" value="Genomic_DNA"/>
</dbReference>
<dbReference type="RefSeq" id="WP_009871760.1">
    <property type="nucleotide sequence ID" value="NC_007429.1"/>
</dbReference>
<dbReference type="SMR" id="Q3KLU5"/>
<dbReference type="KEGG" id="cta:CTA_0443"/>
<dbReference type="HOGENOM" id="CLU_083252_3_0_0"/>
<dbReference type="UniPathway" id="UPA00665"/>
<dbReference type="Proteomes" id="UP000002532">
    <property type="component" value="Chromosome"/>
</dbReference>
<dbReference type="GO" id="GO:0005886">
    <property type="term" value="C:plasma membrane"/>
    <property type="evidence" value="ECO:0007669"/>
    <property type="project" value="UniProtKB-SubCell"/>
</dbReference>
<dbReference type="GO" id="GO:0004190">
    <property type="term" value="F:aspartic-type endopeptidase activity"/>
    <property type="evidence" value="ECO:0007669"/>
    <property type="project" value="UniProtKB-UniRule"/>
</dbReference>
<dbReference type="GO" id="GO:0006508">
    <property type="term" value="P:proteolysis"/>
    <property type="evidence" value="ECO:0007669"/>
    <property type="project" value="UniProtKB-KW"/>
</dbReference>
<dbReference type="HAMAP" id="MF_00161">
    <property type="entry name" value="LspA"/>
    <property type="match status" value="1"/>
</dbReference>
<dbReference type="InterPro" id="IPR001872">
    <property type="entry name" value="Peptidase_A8"/>
</dbReference>
<dbReference type="NCBIfam" id="TIGR00077">
    <property type="entry name" value="lspA"/>
    <property type="match status" value="1"/>
</dbReference>
<dbReference type="PANTHER" id="PTHR33695">
    <property type="entry name" value="LIPOPROTEIN SIGNAL PEPTIDASE"/>
    <property type="match status" value="1"/>
</dbReference>
<dbReference type="PANTHER" id="PTHR33695:SF1">
    <property type="entry name" value="LIPOPROTEIN SIGNAL PEPTIDASE"/>
    <property type="match status" value="1"/>
</dbReference>
<dbReference type="Pfam" id="PF01252">
    <property type="entry name" value="Peptidase_A8"/>
    <property type="match status" value="1"/>
</dbReference>
<dbReference type="PRINTS" id="PR00781">
    <property type="entry name" value="LIPOSIGPTASE"/>
</dbReference>
<dbReference type="PROSITE" id="PS00855">
    <property type="entry name" value="SPASE_II"/>
    <property type="match status" value="1"/>
</dbReference>
<keyword id="KW-0064">Aspartyl protease</keyword>
<keyword id="KW-0997">Cell inner membrane</keyword>
<keyword id="KW-1003">Cell membrane</keyword>
<keyword id="KW-0378">Hydrolase</keyword>
<keyword id="KW-0472">Membrane</keyword>
<keyword id="KW-0645">Protease</keyword>
<keyword id="KW-0812">Transmembrane</keyword>
<keyword id="KW-1133">Transmembrane helix</keyword>
<protein>
    <recommendedName>
        <fullName evidence="1">Lipoprotein signal peptidase</fullName>
        <ecNumber evidence="1">3.4.23.36</ecNumber>
    </recommendedName>
    <alternativeName>
        <fullName evidence="1">Prolipoprotein signal peptidase</fullName>
    </alternativeName>
    <alternativeName>
        <fullName evidence="1">Signal peptidase II</fullName>
        <shortName evidence="1">SPase II</shortName>
    </alternativeName>
</protein>
<proteinExistence type="inferred from homology"/>
<reference key="1">
    <citation type="journal article" date="2005" name="Infect. Immun.">
        <title>Comparative genomic analysis of Chlamydia trachomatis oculotropic and genitotropic strains.</title>
        <authorList>
            <person name="Carlson J.H."/>
            <person name="Porcella S.F."/>
            <person name="McClarty G."/>
            <person name="Caldwell H.D."/>
        </authorList>
    </citation>
    <scope>NUCLEOTIDE SEQUENCE [LARGE SCALE GENOMIC DNA]</scope>
    <source>
        <strain>ATCC VR-571B / DSM 19440 / HAR-13</strain>
    </source>
</reference>
<feature type="chain" id="PRO_0000289362" description="Lipoprotein signal peptidase">
    <location>
        <begin position="1"/>
        <end position="167"/>
    </location>
</feature>
<feature type="transmembrane region" description="Helical" evidence="1">
    <location>
        <begin position="8"/>
        <end position="28"/>
    </location>
</feature>
<feature type="transmembrane region" description="Helical" evidence="1">
    <location>
        <begin position="46"/>
        <end position="66"/>
    </location>
</feature>
<feature type="transmembrane region" description="Helical" evidence="1">
    <location>
        <begin position="68"/>
        <end position="88"/>
    </location>
</feature>
<feature type="transmembrane region" description="Helical" evidence="1">
    <location>
        <begin position="101"/>
        <end position="121"/>
    </location>
</feature>
<feature type="transmembrane region" description="Helical" evidence="1">
    <location>
        <begin position="139"/>
        <end position="159"/>
    </location>
</feature>
<feature type="active site" evidence="1">
    <location>
        <position position="125"/>
    </location>
</feature>
<feature type="active site" evidence="1">
    <location>
        <position position="143"/>
    </location>
</feature>
<gene>
    <name evidence="1" type="primary">lspA</name>
    <name type="ordered locus">CTA_0443</name>
</gene>
<evidence type="ECO:0000255" key="1">
    <source>
        <dbReference type="HAMAP-Rule" id="MF_00161"/>
    </source>
</evidence>
<accession>Q3KLU5</accession>
<comment type="function">
    <text evidence="1">This protein specifically catalyzes the removal of signal peptides from prolipoproteins.</text>
</comment>
<comment type="catalytic activity">
    <reaction evidence="1">
        <text>Release of signal peptides from bacterial membrane prolipoproteins. Hydrolyzes -Xaa-Yaa-Zaa-|-(S,diacylglyceryl)Cys-, in which Xaa is hydrophobic (preferably Leu), and Yaa (Ala or Ser) and Zaa (Gly or Ala) have small, neutral side chains.</text>
        <dbReference type="EC" id="3.4.23.36"/>
    </reaction>
</comment>
<comment type="pathway">
    <text evidence="1">Protein modification; lipoprotein biosynthesis (signal peptide cleavage).</text>
</comment>
<comment type="subcellular location">
    <subcellularLocation>
        <location evidence="1">Cell inner membrane</location>
        <topology evidence="1">Multi-pass membrane protein</topology>
    </subcellularLocation>
</comment>
<comment type="similarity">
    <text evidence="1">Belongs to the peptidase A8 family.</text>
</comment>
<name>LSPA_CHLTA</name>